<keyword id="KW-0249">Electron transport</keyword>
<keyword id="KW-0472">Membrane</keyword>
<keyword id="KW-0496">Mitochondrion</keyword>
<keyword id="KW-0520">NAD</keyword>
<keyword id="KW-0679">Respiratory chain</keyword>
<keyword id="KW-1278">Translocase</keyword>
<keyword id="KW-0812">Transmembrane</keyword>
<keyword id="KW-1133">Transmembrane helix</keyword>
<keyword id="KW-0813">Transport</keyword>
<keyword id="KW-0830">Ubiquinone</keyword>
<sequence length="173" mass="18031">MTYFVLFLGLCFVLGGLAVASKPSPYYGVVGLVLASVAGCGWLLSLGVSFVSLVLFMVYLGGMLVVFVYSVSLAADPFPEAWGDLGVVGYGVGFVMVLMVGMVVGGFVGSLDFGVVTVDSVGMFSVRLDFSGVAMFYSCGVGMFLVAGWGLLLTLFVVLELVRGLSRGAIRAV</sequence>
<accession>P43190</accession>
<organism>
    <name type="scientific">Aethia pusilla</name>
    <name type="common">Least auklet</name>
    <name type="synonym">Uria pusilla</name>
    <dbReference type="NCBI Taxonomy" id="28686"/>
    <lineage>
        <taxon>Eukaryota</taxon>
        <taxon>Metazoa</taxon>
        <taxon>Chordata</taxon>
        <taxon>Craniata</taxon>
        <taxon>Vertebrata</taxon>
        <taxon>Euteleostomi</taxon>
        <taxon>Archelosauria</taxon>
        <taxon>Archosauria</taxon>
        <taxon>Dinosauria</taxon>
        <taxon>Saurischia</taxon>
        <taxon>Theropoda</taxon>
        <taxon>Coelurosauria</taxon>
        <taxon>Aves</taxon>
        <taxon>Neognathae</taxon>
        <taxon>Neoaves</taxon>
        <taxon>Charadriiformes</taxon>
        <taxon>Alcidae</taxon>
        <taxon>Aethia</taxon>
    </lineage>
</organism>
<reference key="1">
    <citation type="journal article" date="1994" name="Curr. Genet.">
        <title>Intragenic rearrangements in the mitochondrial NADH dehydrogenase subunit 6 gene of vertebrates.</title>
        <authorList>
            <person name="Moum T."/>
            <person name="Willassen N.P."/>
            <person name="Johansen S."/>
        </authorList>
    </citation>
    <scope>NUCLEOTIDE SEQUENCE [GENOMIC DNA]</scope>
</reference>
<protein>
    <recommendedName>
        <fullName>NADH-ubiquinone oxidoreductase chain 6</fullName>
        <ecNumber>7.1.1.2</ecNumber>
    </recommendedName>
    <alternativeName>
        <fullName>NADH dehydrogenase subunit 6</fullName>
    </alternativeName>
</protein>
<feature type="chain" id="PRO_0000118231" description="NADH-ubiquinone oxidoreductase chain 6">
    <location>
        <begin position="1"/>
        <end position="173"/>
    </location>
</feature>
<feature type="transmembrane region" description="Helical" evidence="2">
    <location>
        <begin position="1"/>
        <end position="21"/>
    </location>
</feature>
<feature type="transmembrane region" description="Helical" evidence="2">
    <location>
        <begin position="27"/>
        <end position="47"/>
    </location>
</feature>
<feature type="transmembrane region" description="Helical" evidence="2">
    <location>
        <begin position="48"/>
        <end position="68"/>
    </location>
</feature>
<feature type="transmembrane region" description="Helical" evidence="2">
    <location>
        <begin position="87"/>
        <end position="107"/>
    </location>
</feature>
<feature type="transmembrane region" description="Helical" evidence="2">
    <location>
        <begin position="139"/>
        <end position="159"/>
    </location>
</feature>
<dbReference type="EC" id="7.1.1.2"/>
<dbReference type="EMBL" id="X73926">
    <property type="protein sequence ID" value="CAA52131.1"/>
    <property type="molecule type" value="Genomic_DNA"/>
</dbReference>
<dbReference type="PIR" id="S44407">
    <property type="entry name" value="S44407"/>
</dbReference>
<dbReference type="SMR" id="P43190"/>
<dbReference type="GO" id="GO:0031966">
    <property type="term" value="C:mitochondrial membrane"/>
    <property type="evidence" value="ECO:0007669"/>
    <property type="project" value="UniProtKB-SubCell"/>
</dbReference>
<dbReference type="GO" id="GO:0008137">
    <property type="term" value="F:NADH dehydrogenase (ubiquinone) activity"/>
    <property type="evidence" value="ECO:0007669"/>
    <property type="project" value="UniProtKB-EC"/>
</dbReference>
<dbReference type="Gene3D" id="1.20.120.1200">
    <property type="entry name" value="NADH-ubiquinone/plastoquinone oxidoreductase chain 6, subunit NuoJ"/>
    <property type="match status" value="1"/>
</dbReference>
<dbReference type="InterPro" id="IPR050269">
    <property type="entry name" value="ComplexI_Subunit6"/>
</dbReference>
<dbReference type="InterPro" id="IPR001457">
    <property type="entry name" value="NADH_UbQ/plastoQ_OxRdtase_su6"/>
</dbReference>
<dbReference type="InterPro" id="IPR042106">
    <property type="entry name" value="Nuo/plastoQ_OxRdtase_6_NuoJ"/>
</dbReference>
<dbReference type="PANTHER" id="PTHR11435">
    <property type="entry name" value="NADH UBIQUINONE OXIDOREDUCTASE SUBUNIT ND6"/>
    <property type="match status" value="1"/>
</dbReference>
<dbReference type="PANTHER" id="PTHR11435:SF1">
    <property type="entry name" value="NADH-UBIQUINONE OXIDOREDUCTASE CHAIN 6"/>
    <property type="match status" value="1"/>
</dbReference>
<dbReference type="Pfam" id="PF00499">
    <property type="entry name" value="Oxidored_q3"/>
    <property type="match status" value="1"/>
</dbReference>
<geneLocation type="mitochondrion"/>
<name>NU6M_AETPU</name>
<evidence type="ECO:0000250" key="1"/>
<evidence type="ECO:0000255" key="2"/>
<evidence type="ECO:0000305" key="3"/>
<proteinExistence type="inferred from homology"/>
<gene>
    <name type="primary">MT-ND6</name>
    <name type="synonym">MTND6</name>
    <name type="synonym">NADH6</name>
    <name type="synonym">ND6</name>
</gene>
<comment type="function">
    <text evidence="1">Core subunit of the mitochondrial membrane respiratory chain NADH dehydrogenase (Complex I) that is believed to belong to the minimal assembly required for catalysis. Complex I functions in the transfer of electrons from NADH to the respiratory chain. The immediate electron acceptor for the enzyme is believed to be ubiquinone (By similarity).</text>
</comment>
<comment type="catalytic activity">
    <reaction>
        <text>a ubiquinone + NADH + 5 H(+)(in) = a ubiquinol + NAD(+) + 4 H(+)(out)</text>
        <dbReference type="Rhea" id="RHEA:29091"/>
        <dbReference type="Rhea" id="RHEA-COMP:9565"/>
        <dbReference type="Rhea" id="RHEA-COMP:9566"/>
        <dbReference type="ChEBI" id="CHEBI:15378"/>
        <dbReference type="ChEBI" id="CHEBI:16389"/>
        <dbReference type="ChEBI" id="CHEBI:17976"/>
        <dbReference type="ChEBI" id="CHEBI:57540"/>
        <dbReference type="ChEBI" id="CHEBI:57945"/>
        <dbReference type="EC" id="7.1.1.2"/>
    </reaction>
</comment>
<comment type="subcellular location">
    <subcellularLocation>
        <location evidence="3">Mitochondrion membrane</location>
        <topology evidence="3">Multi-pass membrane protein</topology>
    </subcellularLocation>
</comment>
<comment type="similarity">
    <text evidence="3">Belongs to the complex I subunit 6 family.</text>
</comment>